<reference key="1">
    <citation type="journal article" date="2008" name="Genome Res.">
        <title>Comparative genome analysis of Salmonella enteritidis PT4 and Salmonella gallinarum 287/91 provides insights into evolutionary and host adaptation pathways.</title>
        <authorList>
            <person name="Thomson N.R."/>
            <person name="Clayton D.J."/>
            <person name="Windhorst D."/>
            <person name="Vernikos G."/>
            <person name="Davidson S."/>
            <person name="Churcher C."/>
            <person name="Quail M.A."/>
            <person name="Stevens M."/>
            <person name="Jones M.A."/>
            <person name="Watson M."/>
            <person name="Barron A."/>
            <person name="Layton A."/>
            <person name="Pickard D."/>
            <person name="Kingsley R.A."/>
            <person name="Bignell A."/>
            <person name="Clark L."/>
            <person name="Harris B."/>
            <person name="Ormond D."/>
            <person name="Abdellah Z."/>
            <person name="Brooks K."/>
            <person name="Cherevach I."/>
            <person name="Chillingworth T."/>
            <person name="Woodward J."/>
            <person name="Norberczak H."/>
            <person name="Lord A."/>
            <person name="Arrowsmith C."/>
            <person name="Jagels K."/>
            <person name="Moule S."/>
            <person name="Mungall K."/>
            <person name="Saunders M."/>
            <person name="Whitehead S."/>
            <person name="Chabalgoity J.A."/>
            <person name="Maskell D."/>
            <person name="Humphreys T."/>
            <person name="Roberts M."/>
            <person name="Barrow P.A."/>
            <person name="Dougan G."/>
            <person name="Parkhill J."/>
        </authorList>
    </citation>
    <scope>NUCLEOTIDE SEQUENCE [LARGE SCALE GENOMIC DNA]</scope>
    <source>
        <strain>P125109</strain>
    </source>
</reference>
<accession>B5R292</accession>
<protein>
    <recommendedName>
        <fullName evidence="1">Small ribosomal subunit protein uS10</fullName>
    </recommendedName>
    <alternativeName>
        <fullName evidence="2">30S ribosomal protein S10</fullName>
    </alternativeName>
</protein>
<dbReference type="EMBL" id="AM933172">
    <property type="protein sequence ID" value="CAR34844.1"/>
    <property type="molecule type" value="Genomic_DNA"/>
</dbReference>
<dbReference type="RefSeq" id="WP_001181005.1">
    <property type="nucleotide sequence ID" value="NC_011294.1"/>
</dbReference>
<dbReference type="SMR" id="B5R292"/>
<dbReference type="GeneID" id="98390443"/>
<dbReference type="KEGG" id="set:SEN3269"/>
<dbReference type="HOGENOM" id="CLU_122625_1_3_6"/>
<dbReference type="Proteomes" id="UP000000613">
    <property type="component" value="Chromosome"/>
</dbReference>
<dbReference type="GO" id="GO:1990904">
    <property type="term" value="C:ribonucleoprotein complex"/>
    <property type="evidence" value="ECO:0007669"/>
    <property type="project" value="UniProtKB-KW"/>
</dbReference>
<dbReference type="GO" id="GO:0005840">
    <property type="term" value="C:ribosome"/>
    <property type="evidence" value="ECO:0007669"/>
    <property type="project" value="UniProtKB-KW"/>
</dbReference>
<dbReference type="GO" id="GO:0003735">
    <property type="term" value="F:structural constituent of ribosome"/>
    <property type="evidence" value="ECO:0007669"/>
    <property type="project" value="InterPro"/>
</dbReference>
<dbReference type="GO" id="GO:0000049">
    <property type="term" value="F:tRNA binding"/>
    <property type="evidence" value="ECO:0007669"/>
    <property type="project" value="UniProtKB-UniRule"/>
</dbReference>
<dbReference type="GO" id="GO:0006412">
    <property type="term" value="P:translation"/>
    <property type="evidence" value="ECO:0007669"/>
    <property type="project" value="UniProtKB-UniRule"/>
</dbReference>
<dbReference type="FunFam" id="3.30.70.600:FF:000001">
    <property type="entry name" value="30S ribosomal protein S10"/>
    <property type="match status" value="1"/>
</dbReference>
<dbReference type="Gene3D" id="3.30.70.600">
    <property type="entry name" value="Ribosomal protein S10 domain"/>
    <property type="match status" value="1"/>
</dbReference>
<dbReference type="HAMAP" id="MF_00508">
    <property type="entry name" value="Ribosomal_uS10"/>
    <property type="match status" value="1"/>
</dbReference>
<dbReference type="InterPro" id="IPR001848">
    <property type="entry name" value="Ribosomal_uS10"/>
</dbReference>
<dbReference type="InterPro" id="IPR018268">
    <property type="entry name" value="Ribosomal_uS10_CS"/>
</dbReference>
<dbReference type="InterPro" id="IPR027486">
    <property type="entry name" value="Ribosomal_uS10_dom"/>
</dbReference>
<dbReference type="InterPro" id="IPR036838">
    <property type="entry name" value="Ribosomal_uS10_dom_sf"/>
</dbReference>
<dbReference type="NCBIfam" id="NF001861">
    <property type="entry name" value="PRK00596.1"/>
    <property type="match status" value="1"/>
</dbReference>
<dbReference type="NCBIfam" id="TIGR01049">
    <property type="entry name" value="rpsJ_bact"/>
    <property type="match status" value="1"/>
</dbReference>
<dbReference type="PANTHER" id="PTHR11700">
    <property type="entry name" value="30S RIBOSOMAL PROTEIN S10 FAMILY MEMBER"/>
    <property type="match status" value="1"/>
</dbReference>
<dbReference type="Pfam" id="PF00338">
    <property type="entry name" value="Ribosomal_S10"/>
    <property type="match status" value="1"/>
</dbReference>
<dbReference type="PRINTS" id="PR00971">
    <property type="entry name" value="RIBOSOMALS10"/>
</dbReference>
<dbReference type="SMART" id="SM01403">
    <property type="entry name" value="Ribosomal_S10"/>
    <property type="match status" value="1"/>
</dbReference>
<dbReference type="SUPFAM" id="SSF54999">
    <property type="entry name" value="Ribosomal protein S10"/>
    <property type="match status" value="1"/>
</dbReference>
<dbReference type="PROSITE" id="PS00361">
    <property type="entry name" value="RIBOSOMAL_S10"/>
    <property type="match status" value="1"/>
</dbReference>
<feature type="chain" id="PRO_1000127177" description="Small ribosomal subunit protein uS10">
    <location>
        <begin position="1"/>
        <end position="103"/>
    </location>
</feature>
<organism>
    <name type="scientific">Salmonella enteritidis PT4 (strain P125109)</name>
    <dbReference type="NCBI Taxonomy" id="550537"/>
    <lineage>
        <taxon>Bacteria</taxon>
        <taxon>Pseudomonadati</taxon>
        <taxon>Pseudomonadota</taxon>
        <taxon>Gammaproteobacteria</taxon>
        <taxon>Enterobacterales</taxon>
        <taxon>Enterobacteriaceae</taxon>
        <taxon>Salmonella</taxon>
    </lineage>
</organism>
<sequence>MQNQRIRIRLKAFDHRLIDQSTAEIVETAKRTGAQVRGPIPLPTRKERFTVLISPHVNKDARDQYEIRTHKRLVDIVEPTEKTVDALMRLDLAAGVDVQISLG</sequence>
<gene>
    <name evidence="1" type="primary">rpsJ</name>
    <name type="ordered locus">SEN3269</name>
</gene>
<comment type="function">
    <text evidence="1">Involved in the binding of tRNA to the ribosomes.</text>
</comment>
<comment type="subunit">
    <text evidence="1">Part of the 30S ribosomal subunit.</text>
</comment>
<comment type="similarity">
    <text evidence="1">Belongs to the universal ribosomal protein uS10 family.</text>
</comment>
<evidence type="ECO:0000255" key="1">
    <source>
        <dbReference type="HAMAP-Rule" id="MF_00508"/>
    </source>
</evidence>
<evidence type="ECO:0000305" key="2"/>
<proteinExistence type="inferred from homology"/>
<keyword id="KW-0687">Ribonucleoprotein</keyword>
<keyword id="KW-0689">Ribosomal protein</keyword>
<name>RS10_SALEP</name>